<sequence>ACSAG</sequence>
<dbReference type="GO" id="GO:0042742">
    <property type="term" value="P:defense response to bacterium"/>
    <property type="evidence" value="ECO:0007669"/>
    <property type="project" value="UniProtKB-KW"/>
</dbReference>
<keyword id="KW-0044">Antibiotic</keyword>
<keyword id="KW-0929">Antimicrobial</keyword>
<keyword id="KW-0903">Direct protein sequencing</keyword>
<accession>P84182</accession>
<comment type="function">
    <text evidence="1">Displays antimicrobial activity against E.coli, S.aureus and P.aeruginosa.</text>
</comment>
<comment type="mass spectrometry"/>
<protein>
    <recommendedName>
        <fullName>Antimicrobial peptide OEP3121</fullName>
    </recommendedName>
</protein>
<reference evidence="2" key="1">
    <citation type="journal article" date="2004" name="Acta Biochim. Biophys. Sin.">
        <title>Purification of a novel antibacterial short peptide in earthworm Eisenia foetida.</title>
        <authorList>
            <person name="Liu Y.-Q."/>
            <person name="Sun Z.-J."/>
            <person name="Wang C."/>
            <person name="Li S.-J."/>
            <person name="Liu Y.-Z."/>
        </authorList>
    </citation>
    <scope>PROTEIN SEQUENCE</scope>
    <scope>FUNCTION</scope>
    <scope>MASS SPECTROMETRY</scope>
</reference>
<organism>
    <name type="scientific">Eisenia fetida</name>
    <name type="common">Red wiggler worm</name>
    <dbReference type="NCBI Taxonomy" id="6396"/>
    <lineage>
        <taxon>Eukaryota</taxon>
        <taxon>Metazoa</taxon>
        <taxon>Spiralia</taxon>
        <taxon>Lophotrochozoa</taxon>
        <taxon>Annelida</taxon>
        <taxon>Clitellata</taxon>
        <taxon>Oligochaeta</taxon>
        <taxon>Crassiclitellata</taxon>
        <taxon>Lumbricina</taxon>
        <taxon>Lumbricidae</taxon>
        <taxon>Lumbricinae</taxon>
        <taxon>Eisenia</taxon>
    </lineage>
</organism>
<name>AP21_EISFE</name>
<feature type="peptide" id="PRO_0000044109" description="Antimicrobial peptide OEP3121">
    <location>
        <begin position="1"/>
        <end position="5"/>
    </location>
</feature>
<evidence type="ECO:0000269" key="1">
    <source>
    </source>
</evidence>
<evidence type="ECO:0000305" key="2"/>
<proteinExistence type="evidence at protein level"/>